<evidence type="ECO:0000255" key="1">
    <source>
        <dbReference type="HAMAP-Rule" id="MF_00181"/>
    </source>
</evidence>
<feature type="chain" id="PRO_1000098304" description="Probable cytosol aminopeptidase">
    <location>
        <begin position="1"/>
        <end position="494"/>
    </location>
</feature>
<feature type="active site" evidence="1">
    <location>
        <position position="272"/>
    </location>
</feature>
<feature type="active site" evidence="1">
    <location>
        <position position="346"/>
    </location>
</feature>
<feature type="binding site" evidence="1">
    <location>
        <position position="260"/>
    </location>
    <ligand>
        <name>Mn(2+)</name>
        <dbReference type="ChEBI" id="CHEBI:29035"/>
        <label>2</label>
    </ligand>
</feature>
<feature type="binding site" evidence="1">
    <location>
        <position position="265"/>
    </location>
    <ligand>
        <name>Mn(2+)</name>
        <dbReference type="ChEBI" id="CHEBI:29035"/>
        <label>1</label>
    </ligand>
</feature>
<feature type="binding site" evidence="1">
    <location>
        <position position="265"/>
    </location>
    <ligand>
        <name>Mn(2+)</name>
        <dbReference type="ChEBI" id="CHEBI:29035"/>
        <label>2</label>
    </ligand>
</feature>
<feature type="binding site" evidence="1">
    <location>
        <position position="283"/>
    </location>
    <ligand>
        <name>Mn(2+)</name>
        <dbReference type="ChEBI" id="CHEBI:29035"/>
        <label>2</label>
    </ligand>
</feature>
<feature type="binding site" evidence="1">
    <location>
        <position position="342"/>
    </location>
    <ligand>
        <name>Mn(2+)</name>
        <dbReference type="ChEBI" id="CHEBI:29035"/>
        <label>1</label>
    </ligand>
</feature>
<feature type="binding site" evidence="1">
    <location>
        <position position="344"/>
    </location>
    <ligand>
        <name>Mn(2+)</name>
        <dbReference type="ChEBI" id="CHEBI:29035"/>
        <label>1</label>
    </ligand>
</feature>
<feature type="binding site" evidence="1">
    <location>
        <position position="344"/>
    </location>
    <ligand>
        <name>Mn(2+)</name>
        <dbReference type="ChEBI" id="CHEBI:29035"/>
        <label>2</label>
    </ligand>
</feature>
<gene>
    <name evidence="1" type="primary">pepA</name>
    <name type="ordered locus">BcerKBAB4_4743</name>
</gene>
<comment type="function">
    <text evidence="1">Presumably involved in the processing and regular turnover of intracellular proteins. Catalyzes the removal of unsubstituted N-terminal amino acids from various peptides.</text>
</comment>
<comment type="catalytic activity">
    <reaction evidence="1">
        <text>Release of an N-terminal amino acid, Xaa-|-Yaa-, in which Xaa is preferably Leu, but may be other amino acids including Pro although not Arg or Lys, and Yaa may be Pro. Amino acid amides and methyl esters are also readily hydrolyzed, but rates on arylamides are exceedingly low.</text>
        <dbReference type="EC" id="3.4.11.1"/>
    </reaction>
</comment>
<comment type="catalytic activity">
    <reaction evidence="1">
        <text>Release of an N-terminal amino acid, preferentially leucine, but not glutamic or aspartic acids.</text>
        <dbReference type="EC" id="3.4.11.10"/>
    </reaction>
</comment>
<comment type="cofactor">
    <cofactor evidence="1">
        <name>Mn(2+)</name>
        <dbReference type="ChEBI" id="CHEBI:29035"/>
    </cofactor>
    <text evidence="1">Binds 2 manganese ions per subunit.</text>
</comment>
<comment type="subcellular location">
    <subcellularLocation>
        <location evidence="1">Cytoplasm</location>
    </subcellularLocation>
</comment>
<comment type="similarity">
    <text evidence="1">Belongs to the peptidase M17 family.</text>
</comment>
<protein>
    <recommendedName>
        <fullName evidence="1">Probable cytosol aminopeptidase</fullName>
        <ecNumber evidence="1">3.4.11.1</ecNumber>
    </recommendedName>
    <alternativeName>
        <fullName evidence="1">Leucine aminopeptidase</fullName>
        <shortName evidence="1">LAP</shortName>
        <ecNumber evidence="1">3.4.11.10</ecNumber>
    </alternativeName>
    <alternativeName>
        <fullName evidence="1">Leucyl aminopeptidase</fullName>
    </alternativeName>
</protein>
<organism>
    <name type="scientific">Bacillus mycoides (strain KBAB4)</name>
    <name type="common">Bacillus weihenstephanensis</name>
    <dbReference type="NCBI Taxonomy" id="315730"/>
    <lineage>
        <taxon>Bacteria</taxon>
        <taxon>Bacillati</taxon>
        <taxon>Bacillota</taxon>
        <taxon>Bacilli</taxon>
        <taxon>Bacillales</taxon>
        <taxon>Bacillaceae</taxon>
        <taxon>Bacillus</taxon>
        <taxon>Bacillus cereus group</taxon>
    </lineage>
</organism>
<accession>A9VMY8</accession>
<dbReference type="EC" id="3.4.11.1" evidence="1"/>
<dbReference type="EC" id="3.4.11.10" evidence="1"/>
<dbReference type="EMBL" id="CP000903">
    <property type="protein sequence ID" value="ABY45893.1"/>
    <property type="molecule type" value="Genomic_DNA"/>
</dbReference>
<dbReference type="RefSeq" id="WP_002143593.1">
    <property type="nucleotide sequence ID" value="NC_010184.1"/>
</dbReference>
<dbReference type="SMR" id="A9VMY8"/>
<dbReference type="MEROPS" id="M17.010"/>
<dbReference type="KEGG" id="bwe:BcerKBAB4_4743"/>
<dbReference type="eggNOG" id="COG0260">
    <property type="taxonomic scope" value="Bacteria"/>
</dbReference>
<dbReference type="HOGENOM" id="CLU_013734_6_0_9"/>
<dbReference type="Proteomes" id="UP000002154">
    <property type="component" value="Chromosome"/>
</dbReference>
<dbReference type="GO" id="GO:0005737">
    <property type="term" value="C:cytoplasm"/>
    <property type="evidence" value="ECO:0007669"/>
    <property type="project" value="UniProtKB-SubCell"/>
</dbReference>
<dbReference type="GO" id="GO:0030145">
    <property type="term" value="F:manganese ion binding"/>
    <property type="evidence" value="ECO:0007669"/>
    <property type="project" value="UniProtKB-UniRule"/>
</dbReference>
<dbReference type="GO" id="GO:0070006">
    <property type="term" value="F:metalloaminopeptidase activity"/>
    <property type="evidence" value="ECO:0007669"/>
    <property type="project" value="InterPro"/>
</dbReference>
<dbReference type="GO" id="GO:0006508">
    <property type="term" value="P:proteolysis"/>
    <property type="evidence" value="ECO:0007669"/>
    <property type="project" value="UniProtKB-KW"/>
</dbReference>
<dbReference type="CDD" id="cd00433">
    <property type="entry name" value="Peptidase_M17"/>
    <property type="match status" value="1"/>
</dbReference>
<dbReference type="Gene3D" id="3.40.220.10">
    <property type="entry name" value="Leucine Aminopeptidase, subunit E, domain 1"/>
    <property type="match status" value="1"/>
</dbReference>
<dbReference type="Gene3D" id="3.40.630.10">
    <property type="entry name" value="Zn peptidases"/>
    <property type="match status" value="1"/>
</dbReference>
<dbReference type="HAMAP" id="MF_00181">
    <property type="entry name" value="Cytosol_peptidase_M17"/>
    <property type="match status" value="1"/>
</dbReference>
<dbReference type="InterPro" id="IPR011356">
    <property type="entry name" value="Leucine_aapep/pepB"/>
</dbReference>
<dbReference type="InterPro" id="IPR043472">
    <property type="entry name" value="Macro_dom-like"/>
</dbReference>
<dbReference type="InterPro" id="IPR000819">
    <property type="entry name" value="Peptidase_M17_C"/>
</dbReference>
<dbReference type="InterPro" id="IPR023042">
    <property type="entry name" value="Peptidase_M17_leu_NH2_pept"/>
</dbReference>
<dbReference type="InterPro" id="IPR008283">
    <property type="entry name" value="Peptidase_M17_N"/>
</dbReference>
<dbReference type="NCBIfam" id="NF002073">
    <property type="entry name" value="PRK00913.1-2"/>
    <property type="match status" value="1"/>
</dbReference>
<dbReference type="NCBIfam" id="NF002074">
    <property type="entry name" value="PRK00913.1-4"/>
    <property type="match status" value="1"/>
</dbReference>
<dbReference type="NCBIfam" id="NF002083">
    <property type="entry name" value="PRK00913.3-5"/>
    <property type="match status" value="1"/>
</dbReference>
<dbReference type="PANTHER" id="PTHR11963:SF23">
    <property type="entry name" value="CYTOSOL AMINOPEPTIDASE"/>
    <property type="match status" value="1"/>
</dbReference>
<dbReference type="PANTHER" id="PTHR11963">
    <property type="entry name" value="LEUCINE AMINOPEPTIDASE-RELATED"/>
    <property type="match status" value="1"/>
</dbReference>
<dbReference type="Pfam" id="PF00883">
    <property type="entry name" value="Peptidase_M17"/>
    <property type="match status" value="1"/>
</dbReference>
<dbReference type="Pfam" id="PF02789">
    <property type="entry name" value="Peptidase_M17_N"/>
    <property type="match status" value="1"/>
</dbReference>
<dbReference type="PRINTS" id="PR00481">
    <property type="entry name" value="LAMNOPPTDASE"/>
</dbReference>
<dbReference type="SUPFAM" id="SSF52949">
    <property type="entry name" value="Macro domain-like"/>
    <property type="match status" value="1"/>
</dbReference>
<dbReference type="SUPFAM" id="SSF53187">
    <property type="entry name" value="Zn-dependent exopeptidases"/>
    <property type="match status" value="1"/>
</dbReference>
<dbReference type="PROSITE" id="PS00631">
    <property type="entry name" value="CYTOSOL_AP"/>
    <property type="match status" value="1"/>
</dbReference>
<reference key="1">
    <citation type="journal article" date="2008" name="Chem. Biol. Interact.">
        <title>Extending the Bacillus cereus group genomics to putative food-borne pathogens of different toxicity.</title>
        <authorList>
            <person name="Lapidus A."/>
            <person name="Goltsman E."/>
            <person name="Auger S."/>
            <person name="Galleron N."/>
            <person name="Segurens B."/>
            <person name="Dossat C."/>
            <person name="Land M.L."/>
            <person name="Broussolle V."/>
            <person name="Brillard J."/>
            <person name="Guinebretiere M.-H."/>
            <person name="Sanchis V."/>
            <person name="Nguen-the C."/>
            <person name="Lereclus D."/>
            <person name="Richardson P."/>
            <person name="Wincker P."/>
            <person name="Weissenbach J."/>
            <person name="Ehrlich S.D."/>
            <person name="Sorokin A."/>
        </authorList>
    </citation>
    <scope>NUCLEOTIDE SEQUENCE [LARGE SCALE GENOMIC DNA]</scope>
    <source>
        <strain>KBAB4</strain>
    </source>
</reference>
<proteinExistence type="inferred from homology"/>
<name>AMPA_BACMK</name>
<keyword id="KW-0031">Aminopeptidase</keyword>
<keyword id="KW-0963">Cytoplasm</keyword>
<keyword id="KW-0378">Hydrolase</keyword>
<keyword id="KW-0464">Manganese</keyword>
<keyword id="KW-0479">Metal-binding</keyword>
<keyword id="KW-0645">Protease</keyword>
<sequence>MFRVQKELVSHEAVIVALFEEDKKSSFVQELDKAFEGQLQVLLEEKELSTKKKAISKVHSLGKTNVKRYYFVGLGKKESYTTETLRAALGKAFKALQAAKVQDAAILLDSFVTDKLDAIDVAHIAAEVQGLGTYELQTYKADKKDRVELEKFTAITAEDAQEIEAALTVGYVHGRATNSARTLVNMPPNVLTATKLAEYAVELAEKYDMDYKVLEKEEMEELGMGALLAVNQGSTEPPKMIALIYKGKEEWKDVIGFVGKGITYDTGGYSLKPREGMVGMKGDMGGAAAVLGAMEIIGELRPEQNVIAVIPSTDNVVSGTAFKPDDVITSMSGKTIEVLNTDAEGRLALADGITYAKKLGANYLVDVATLTGGVIVALGNHTTGAMTNNEELFEQVLEASMETDEPIWQLPIFERDKERVKNSKFADLNNSPGREGHAVMAGTFIGEFAEETPWVHLDIAGTSETSGAHDLGPSGATGAMVRTLATLVERFGEE</sequence>